<protein>
    <recommendedName>
        <fullName evidence="1">S-adenosylmethionine:tRNA ribosyltransferase-isomerase</fullName>
        <ecNumber evidence="1">2.4.99.17</ecNumber>
    </recommendedName>
    <alternativeName>
        <fullName evidence="1">Queuosine biosynthesis protein QueA</fullName>
    </alternativeName>
</protein>
<comment type="function">
    <text evidence="1">Transfers and isomerizes the ribose moiety from AdoMet to the 7-aminomethyl group of 7-deazaguanine (preQ1-tRNA) to give epoxyqueuosine (oQ-tRNA).</text>
</comment>
<comment type="catalytic activity">
    <reaction evidence="1">
        <text>7-aminomethyl-7-carbaguanosine(34) in tRNA + S-adenosyl-L-methionine = epoxyqueuosine(34) in tRNA + adenine + L-methionine + 2 H(+)</text>
        <dbReference type="Rhea" id="RHEA:32155"/>
        <dbReference type="Rhea" id="RHEA-COMP:10342"/>
        <dbReference type="Rhea" id="RHEA-COMP:18582"/>
        <dbReference type="ChEBI" id="CHEBI:15378"/>
        <dbReference type="ChEBI" id="CHEBI:16708"/>
        <dbReference type="ChEBI" id="CHEBI:57844"/>
        <dbReference type="ChEBI" id="CHEBI:59789"/>
        <dbReference type="ChEBI" id="CHEBI:82833"/>
        <dbReference type="ChEBI" id="CHEBI:194443"/>
        <dbReference type="EC" id="2.4.99.17"/>
    </reaction>
</comment>
<comment type="pathway">
    <text evidence="1">tRNA modification; tRNA-queuosine biosynthesis.</text>
</comment>
<comment type="subunit">
    <text evidence="1">Monomer.</text>
</comment>
<comment type="subcellular location">
    <subcellularLocation>
        <location evidence="1">Cytoplasm</location>
    </subcellularLocation>
</comment>
<comment type="similarity">
    <text evidence="1">Belongs to the QueA family.</text>
</comment>
<accession>A1APZ3</accession>
<organism>
    <name type="scientific">Pelobacter propionicus (strain DSM 2379 / NBRC 103807 / OttBd1)</name>
    <dbReference type="NCBI Taxonomy" id="338966"/>
    <lineage>
        <taxon>Bacteria</taxon>
        <taxon>Pseudomonadati</taxon>
        <taxon>Thermodesulfobacteriota</taxon>
        <taxon>Desulfuromonadia</taxon>
        <taxon>Desulfuromonadales</taxon>
        <taxon>Desulfuromonadaceae</taxon>
        <taxon>Pelobacter</taxon>
    </lineage>
</organism>
<name>QUEA_PELPD</name>
<feature type="chain" id="PRO_1000015243" description="S-adenosylmethionine:tRNA ribosyltransferase-isomerase">
    <location>
        <begin position="1"/>
        <end position="343"/>
    </location>
</feature>
<sequence>MLVKEFDYHLPEELIARYPAPERDGSRLMLLNRESGTIGHGLFRDIADHLRPGDLLVLNDTRVIPARLFGRKATGGRVEIFLVRRQETQAERWSCLMRSSKGMRPGQLITLAGAMTALVVERLEPEGWLLEFQGAEPFSVWLEREGEMPLPPYLQRPAESGDQLRYQTVFARSAGAVAAPTAGLHFTPELLERLAERGVATACLTLHTGPGTFQPLRVERVQDHRIHSERYHISAETCQAIAETKQRGGRVVAVGTTSARTLEYAADEKGGLCPGSGDADIFIYPGYRFRVVDALVTNFHLPESTLIMLVSAFAGKEYVFHAYHEAARLGYRFYSYGDAMFIE</sequence>
<proteinExistence type="inferred from homology"/>
<dbReference type="EC" id="2.4.99.17" evidence="1"/>
<dbReference type="EMBL" id="CP000482">
    <property type="protein sequence ID" value="ABK99413.1"/>
    <property type="molecule type" value="Genomic_DNA"/>
</dbReference>
<dbReference type="RefSeq" id="WP_011735690.1">
    <property type="nucleotide sequence ID" value="NC_008609.1"/>
</dbReference>
<dbReference type="SMR" id="A1APZ3"/>
<dbReference type="STRING" id="338966.Ppro_1801"/>
<dbReference type="KEGG" id="ppd:Ppro_1801"/>
<dbReference type="eggNOG" id="COG0809">
    <property type="taxonomic scope" value="Bacteria"/>
</dbReference>
<dbReference type="HOGENOM" id="CLU_039110_1_0_7"/>
<dbReference type="OrthoDB" id="9805933at2"/>
<dbReference type="UniPathway" id="UPA00392"/>
<dbReference type="Proteomes" id="UP000006732">
    <property type="component" value="Chromosome"/>
</dbReference>
<dbReference type="GO" id="GO:0005737">
    <property type="term" value="C:cytoplasm"/>
    <property type="evidence" value="ECO:0007669"/>
    <property type="project" value="UniProtKB-SubCell"/>
</dbReference>
<dbReference type="GO" id="GO:0051075">
    <property type="term" value="F:S-adenosylmethionine:tRNA ribosyltransferase-isomerase activity"/>
    <property type="evidence" value="ECO:0007669"/>
    <property type="project" value="UniProtKB-EC"/>
</dbReference>
<dbReference type="GO" id="GO:0008616">
    <property type="term" value="P:queuosine biosynthetic process"/>
    <property type="evidence" value="ECO:0007669"/>
    <property type="project" value="UniProtKB-UniRule"/>
</dbReference>
<dbReference type="GO" id="GO:0002099">
    <property type="term" value="P:tRNA wobble guanine modification"/>
    <property type="evidence" value="ECO:0007669"/>
    <property type="project" value="TreeGrafter"/>
</dbReference>
<dbReference type="FunFam" id="2.40.10.240:FF:000002">
    <property type="entry name" value="S-adenosylmethionine:tRNA ribosyltransferase-isomerase"/>
    <property type="match status" value="1"/>
</dbReference>
<dbReference type="FunFam" id="3.40.1780.10:FF:000001">
    <property type="entry name" value="S-adenosylmethionine:tRNA ribosyltransferase-isomerase"/>
    <property type="match status" value="1"/>
</dbReference>
<dbReference type="Gene3D" id="2.40.10.240">
    <property type="entry name" value="QueA-like"/>
    <property type="match status" value="1"/>
</dbReference>
<dbReference type="Gene3D" id="3.40.1780.10">
    <property type="entry name" value="QueA-like"/>
    <property type="match status" value="1"/>
</dbReference>
<dbReference type="HAMAP" id="MF_00113">
    <property type="entry name" value="QueA"/>
    <property type="match status" value="1"/>
</dbReference>
<dbReference type="InterPro" id="IPR003699">
    <property type="entry name" value="QueA"/>
</dbReference>
<dbReference type="InterPro" id="IPR042118">
    <property type="entry name" value="QueA_dom1"/>
</dbReference>
<dbReference type="InterPro" id="IPR042119">
    <property type="entry name" value="QueA_dom2"/>
</dbReference>
<dbReference type="InterPro" id="IPR036100">
    <property type="entry name" value="QueA_sf"/>
</dbReference>
<dbReference type="NCBIfam" id="NF001140">
    <property type="entry name" value="PRK00147.1"/>
    <property type="match status" value="1"/>
</dbReference>
<dbReference type="NCBIfam" id="TIGR00113">
    <property type="entry name" value="queA"/>
    <property type="match status" value="1"/>
</dbReference>
<dbReference type="PANTHER" id="PTHR30307">
    <property type="entry name" value="S-ADENOSYLMETHIONINE:TRNA RIBOSYLTRANSFERASE-ISOMERASE"/>
    <property type="match status" value="1"/>
</dbReference>
<dbReference type="PANTHER" id="PTHR30307:SF0">
    <property type="entry name" value="S-ADENOSYLMETHIONINE:TRNA RIBOSYLTRANSFERASE-ISOMERASE"/>
    <property type="match status" value="1"/>
</dbReference>
<dbReference type="Pfam" id="PF02547">
    <property type="entry name" value="Queuosine_synth"/>
    <property type="match status" value="1"/>
</dbReference>
<dbReference type="SUPFAM" id="SSF111337">
    <property type="entry name" value="QueA-like"/>
    <property type="match status" value="1"/>
</dbReference>
<evidence type="ECO:0000255" key="1">
    <source>
        <dbReference type="HAMAP-Rule" id="MF_00113"/>
    </source>
</evidence>
<keyword id="KW-0963">Cytoplasm</keyword>
<keyword id="KW-0671">Queuosine biosynthesis</keyword>
<keyword id="KW-1185">Reference proteome</keyword>
<keyword id="KW-0949">S-adenosyl-L-methionine</keyword>
<keyword id="KW-0808">Transferase</keyword>
<gene>
    <name evidence="1" type="primary">queA</name>
    <name type="ordered locus">Ppro_1801</name>
</gene>
<reference key="1">
    <citation type="submission" date="2006-10" db="EMBL/GenBank/DDBJ databases">
        <title>Complete sequence of chromosome of Pelobacter propionicus DSM 2379.</title>
        <authorList>
            <consortium name="US DOE Joint Genome Institute"/>
            <person name="Copeland A."/>
            <person name="Lucas S."/>
            <person name="Lapidus A."/>
            <person name="Barry K."/>
            <person name="Detter J.C."/>
            <person name="Glavina del Rio T."/>
            <person name="Hammon N."/>
            <person name="Israni S."/>
            <person name="Dalin E."/>
            <person name="Tice H."/>
            <person name="Pitluck S."/>
            <person name="Saunders E."/>
            <person name="Brettin T."/>
            <person name="Bruce D."/>
            <person name="Han C."/>
            <person name="Tapia R."/>
            <person name="Schmutz J."/>
            <person name="Larimer F."/>
            <person name="Land M."/>
            <person name="Hauser L."/>
            <person name="Kyrpides N."/>
            <person name="Kim E."/>
            <person name="Lovley D."/>
            <person name="Richardson P."/>
        </authorList>
    </citation>
    <scope>NUCLEOTIDE SEQUENCE [LARGE SCALE GENOMIC DNA]</scope>
    <source>
        <strain>DSM 2379 / NBRC 103807 / OttBd1</strain>
    </source>
</reference>